<comment type="cofactor">
    <cofactor evidence="1">
        <name>Fe(2+)</name>
        <dbReference type="ChEBI" id="CHEBI:29033"/>
    </cofactor>
    <text evidence="1">Binds 1 Fe(2+) ion per subunit.</text>
</comment>
<comment type="cofactor">
    <cofactor evidence="1">
        <name>L-ascorbate</name>
        <dbReference type="ChEBI" id="CHEBI:38290"/>
    </cofactor>
</comment>
<organism>
    <name type="scientific">Synechococcus sp. (strain JA-2-3B'a(2-13))</name>
    <name type="common">Cyanobacteria bacterium Yellowstone B-Prime</name>
    <dbReference type="NCBI Taxonomy" id="321332"/>
    <lineage>
        <taxon>Bacteria</taxon>
        <taxon>Bacillati</taxon>
        <taxon>Cyanobacteriota</taxon>
        <taxon>Cyanophyceae</taxon>
        <taxon>Synechococcales</taxon>
        <taxon>Synechococcaceae</taxon>
        <taxon>Synechococcus</taxon>
    </lineage>
</organism>
<keyword id="KW-0223">Dioxygenase</keyword>
<keyword id="KW-0408">Iron</keyword>
<keyword id="KW-0479">Metal-binding</keyword>
<keyword id="KW-0560">Oxidoreductase</keyword>
<keyword id="KW-1185">Reference proteome</keyword>
<keyword id="KW-0847">Vitamin C</keyword>
<evidence type="ECO:0000255" key="1">
    <source>
        <dbReference type="HAMAP-Rule" id="MF_00657"/>
    </source>
</evidence>
<name>Y2270_SYNJB</name>
<proteinExistence type="inferred from homology"/>
<feature type="chain" id="PRO_0000346531" description="PKHD-type hydroxylase CYB_2270">
    <location>
        <begin position="1"/>
        <end position="224"/>
    </location>
</feature>
<feature type="domain" description="Fe2OG dioxygenase" evidence="1">
    <location>
        <begin position="78"/>
        <end position="176"/>
    </location>
</feature>
<feature type="binding site" evidence="1">
    <location>
        <position position="96"/>
    </location>
    <ligand>
        <name>Fe cation</name>
        <dbReference type="ChEBI" id="CHEBI:24875"/>
    </ligand>
</feature>
<feature type="binding site" evidence="1">
    <location>
        <position position="98"/>
    </location>
    <ligand>
        <name>Fe cation</name>
        <dbReference type="ChEBI" id="CHEBI:24875"/>
    </ligand>
</feature>
<feature type="binding site" evidence="1">
    <location>
        <position position="157"/>
    </location>
    <ligand>
        <name>Fe cation</name>
        <dbReference type="ChEBI" id="CHEBI:24875"/>
    </ligand>
</feature>
<feature type="binding site" evidence="1">
    <location>
        <position position="167"/>
    </location>
    <ligand>
        <name>2-oxoglutarate</name>
        <dbReference type="ChEBI" id="CHEBI:16810"/>
    </ligand>
</feature>
<dbReference type="EC" id="1.14.11.-" evidence="1"/>
<dbReference type="EMBL" id="CP000240">
    <property type="protein sequence ID" value="ABD03212.1"/>
    <property type="molecule type" value="Genomic_DNA"/>
</dbReference>
<dbReference type="RefSeq" id="WP_011431398.1">
    <property type="nucleotide sequence ID" value="NC_007776.1"/>
</dbReference>
<dbReference type="SMR" id="Q2JHA7"/>
<dbReference type="KEGG" id="cyb:CYB_2270"/>
<dbReference type="eggNOG" id="COG3128">
    <property type="taxonomic scope" value="Bacteria"/>
</dbReference>
<dbReference type="HOGENOM" id="CLU_106663_0_0_3"/>
<dbReference type="OrthoDB" id="9812472at2"/>
<dbReference type="Proteomes" id="UP000001938">
    <property type="component" value="Chromosome"/>
</dbReference>
<dbReference type="GO" id="GO:0016706">
    <property type="term" value="F:2-oxoglutarate-dependent dioxygenase activity"/>
    <property type="evidence" value="ECO:0007669"/>
    <property type="project" value="UniProtKB-UniRule"/>
</dbReference>
<dbReference type="GO" id="GO:0005506">
    <property type="term" value="F:iron ion binding"/>
    <property type="evidence" value="ECO:0007669"/>
    <property type="project" value="UniProtKB-UniRule"/>
</dbReference>
<dbReference type="GO" id="GO:0031418">
    <property type="term" value="F:L-ascorbic acid binding"/>
    <property type="evidence" value="ECO:0007669"/>
    <property type="project" value="UniProtKB-KW"/>
</dbReference>
<dbReference type="GO" id="GO:0006974">
    <property type="term" value="P:DNA damage response"/>
    <property type="evidence" value="ECO:0007669"/>
    <property type="project" value="TreeGrafter"/>
</dbReference>
<dbReference type="GO" id="GO:0006879">
    <property type="term" value="P:intracellular iron ion homeostasis"/>
    <property type="evidence" value="ECO:0007669"/>
    <property type="project" value="TreeGrafter"/>
</dbReference>
<dbReference type="Gene3D" id="2.60.120.620">
    <property type="entry name" value="q2cbj1_9rhob like domain"/>
    <property type="match status" value="1"/>
</dbReference>
<dbReference type="Gene3D" id="4.10.860.20">
    <property type="entry name" value="Rabenosyn, Rab binding domain"/>
    <property type="match status" value="1"/>
</dbReference>
<dbReference type="HAMAP" id="MF_00657">
    <property type="entry name" value="Hydroxyl_YbiX"/>
    <property type="match status" value="1"/>
</dbReference>
<dbReference type="InterPro" id="IPR005123">
    <property type="entry name" value="Oxoglu/Fe-dep_dioxygenase_dom"/>
</dbReference>
<dbReference type="InterPro" id="IPR041097">
    <property type="entry name" value="PKHD_C"/>
</dbReference>
<dbReference type="InterPro" id="IPR023550">
    <property type="entry name" value="PKHD_hydroxylase"/>
</dbReference>
<dbReference type="InterPro" id="IPR006620">
    <property type="entry name" value="Pro_4_hyd_alph"/>
</dbReference>
<dbReference type="InterPro" id="IPR044862">
    <property type="entry name" value="Pro_4_hyd_alph_FE2OG_OXY"/>
</dbReference>
<dbReference type="NCBIfam" id="NF003974">
    <property type="entry name" value="PRK05467.1-3"/>
    <property type="match status" value="1"/>
</dbReference>
<dbReference type="NCBIfam" id="NF003975">
    <property type="entry name" value="PRK05467.1-4"/>
    <property type="match status" value="1"/>
</dbReference>
<dbReference type="PANTHER" id="PTHR41536">
    <property type="entry name" value="PKHD-TYPE HYDROXYLASE YBIX"/>
    <property type="match status" value="1"/>
</dbReference>
<dbReference type="PANTHER" id="PTHR41536:SF1">
    <property type="entry name" value="PKHD-TYPE HYDROXYLASE YBIX"/>
    <property type="match status" value="1"/>
</dbReference>
<dbReference type="Pfam" id="PF13640">
    <property type="entry name" value="2OG-FeII_Oxy_3"/>
    <property type="match status" value="1"/>
</dbReference>
<dbReference type="Pfam" id="PF18331">
    <property type="entry name" value="PKHD_C"/>
    <property type="match status" value="1"/>
</dbReference>
<dbReference type="SMART" id="SM00702">
    <property type="entry name" value="P4Hc"/>
    <property type="match status" value="1"/>
</dbReference>
<dbReference type="PROSITE" id="PS51471">
    <property type="entry name" value="FE2OG_OXY"/>
    <property type="match status" value="1"/>
</dbReference>
<gene>
    <name type="ordered locus">CYB_2270</name>
</gene>
<reference key="1">
    <citation type="journal article" date="2007" name="ISME J.">
        <title>Population level functional diversity in a microbial community revealed by comparative genomic and metagenomic analyses.</title>
        <authorList>
            <person name="Bhaya D."/>
            <person name="Grossman A.R."/>
            <person name="Steunou A.-S."/>
            <person name="Khuri N."/>
            <person name="Cohan F.M."/>
            <person name="Hamamura N."/>
            <person name="Melendrez M.C."/>
            <person name="Bateson M.M."/>
            <person name="Ward D.M."/>
            <person name="Heidelberg J.F."/>
        </authorList>
    </citation>
    <scope>NUCLEOTIDE SEQUENCE [LARGE SCALE GENOMIC DNA]</scope>
    <source>
        <strain>JA-2-3B'a(2-13)</strain>
    </source>
</reference>
<protein>
    <recommendedName>
        <fullName evidence="1">PKHD-type hydroxylase CYB_2270</fullName>
        <ecNumber evidence="1">1.14.11.-</ecNumber>
    </recommendedName>
</protein>
<sequence length="224" mass="25377">MILCIGDVLSLAELQQILSLIADAEFVDGALTAGWNARLVKNNRQMPKGSLQQRKIEEIILAALERNLLFQMAARPKLIHSILISCYEAGMSYGTHTDDALMLDRHQLMRTDISFTLFLSAPEDYDGGELKIESSEGEQAYKLPAGALILYPASTLHRVEPVTRGIRYAAVSWVQSLIRDPQEREILFDLQTVRQQMFQESGKTRHFDLISKVYANLLRKWAEL</sequence>
<accession>Q2JHA7</accession>